<reference key="1">
    <citation type="journal article" date="1990" name="Eur. J. Biochem.">
        <title>Yeast homoserine kinase. Characteristics of the corresponding gene, THR1, and the purified enzyme, and evolutionary relationships with other enzymes of threonine metabolism.</title>
        <authorList>
            <person name="Mannhaupt G."/>
            <person name="Pohlenz H.D."/>
            <person name="Seefluth A.K."/>
            <person name="Pilz U."/>
            <person name="Feldmann H."/>
        </authorList>
    </citation>
    <scope>NUCLEOTIDE SEQUENCE [GENOMIC DNA]</scope>
    <scope>PROTEIN SEQUENCE OF 2-16</scope>
    <scope>FUNCTION</scope>
    <scope>CATALYTIC ACTIVITY</scope>
    <scope>SUBUNIT</scope>
</reference>
<reference key="2">
    <citation type="journal article" date="1990" name="Gene">
        <title>Saccharomyces cerevisiae homoserine kinase is homologous to prokaryotic homoserine kinases.</title>
        <authorList>
            <person name="Schultes N.P."/>
            <person name="Ellington A.D."/>
            <person name="Cherry J.M."/>
            <person name="Szostak J.W."/>
        </authorList>
    </citation>
    <scope>NUCLEOTIDE SEQUENCE [GENOMIC DNA]</scope>
</reference>
<reference key="3">
    <citation type="journal article" date="1994" name="Science">
        <title>Complete nucleotide sequence of Saccharomyces cerevisiae chromosome VIII.</title>
        <authorList>
            <person name="Johnston M."/>
            <person name="Andrews S."/>
            <person name="Brinkman R."/>
            <person name="Cooper J."/>
            <person name="Ding H."/>
            <person name="Dover J."/>
            <person name="Du Z."/>
            <person name="Favello A."/>
            <person name="Fulton L."/>
            <person name="Gattung S."/>
            <person name="Geisel C."/>
            <person name="Kirsten J."/>
            <person name="Kucaba T."/>
            <person name="Hillier L.W."/>
            <person name="Jier M."/>
            <person name="Johnston L."/>
            <person name="Langston Y."/>
            <person name="Latreille P."/>
            <person name="Louis E.J."/>
            <person name="Macri C."/>
            <person name="Mardis E."/>
            <person name="Menezes S."/>
            <person name="Mouser L."/>
            <person name="Nhan M."/>
            <person name="Rifkin L."/>
            <person name="Riles L."/>
            <person name="St Peter H."/>
            <person name="Trevaskis E."/>
            <person name="Vaughan K."/>
            <person name="Vignati D."/>
            <person name="Wilcox L."/>
            <person name="Wohldman P."/>
            <person name="Waterston R."/>
            <person name="Wilson R."/>
            <person name="Vaudin M."/>
        </authorList>
    </citation>
    <scope>NUCLEOTIDE SEQUENCE [LARGE SCALE GENOMIC DNA]</scope>
    <source>
        <strain>ATCC 204508 / S288c</strain>
    </source>
</reference>
<reference key="4">
    <citation type="journal article" date="2014" name="G3 (Bethesda)">
        <title>The reference genome sequence of Saccharomyces cerevisiae: Then and now.</title>
        <authorList>
            <person name="Engel S.R."/>
            <person name="Dietrich F.S."/>
            <person name="Fisk D.G."/>
            <person name="Binkley G."/>
            <person name="Balakrishnan R."/>
            <person name="Costanzo M.C."/>
            <person name="Dwight S.S."/>
            <person name="Hitz B.C."/>
            <person name="Karra K."/>
            <person name="Nash R.S."/>
            <person name="Weng S."/>
            <person name="Wong E.D."/>
            <person name="Lloyd P."/>
            <person name="Skrzypek M.S."/>
            <person name="Miyasato S.R."/>
            <person name="Simison M."/>
            <person name="Cherry J.M."/>
        </authorList>
    </citation>
    <scope>GENOME REANNOTATION</scope>
    <source>
        <strain>ATCC 204508 / S288c</strain>
    </source>
</reference>
<reference key="5">
    <citation type="journal article" date="2003" name="Nature">
        <title>Global analysis of protein expression in yeast.</title>
        <authorList>
            <person name="Ghaemmaghami S."/>
            <person name="Huh W.-K."/>
            <person name="Bower K."/>
            <person name="Howson R.W."/>
            <person name="Belle A."/>
            <person name="Dephoure N."/>
            <person name="O'Shea E.K."/>
            <person name="Weissman J.S."/>
        </authorList>
    </citation>
    <scope>LEVEL OF PROTEIN EXPRESSION [LARGE SCALE ANALYSIS]</scope>
</reference>
<reference key="6">
    <citation type="journal article" date="2010" name="Eukaryot. Cell">
        <title>Homoserine toxicity in Saccharomyces cerevisiae and Candida albicans homoserine kinase (thr1Delta) mutants.</title>
        <authorList>
            <person name="Kingsbury J.M."/>
            <person name="McCusker J.H."/>
        </authorList>
    </citation>
    <scope>DISRUPTION PHENOTYPE</scope>
    <source>
        <strain evidence="5">YJM 145</strain>
    </source>
</reference>
<reference key="7">
    <citation type="journal article" date="2010" name="Eukaryot. Cell">
        <title>Fungal homoserine kinase (thr1Delta) mutants are attenuated in virulence and die rapidly upon threonine starvation and serum incubation.</title>
        <authorList>
            <person name="Kingsbury J.M."/>
            <person name="McCusker J.H."/>
        </authorList>
    </citation>
    <scope>FUNCTION</scope>
    <scope>PATHWAY</scope>
    <scope>DISRUPTION PHENOTYPE</scope>
    <source>
        <strain evidence="6">YJM 145</strain>
    </source>
</reference>
<reference key="8">
    <citation type="journal article" date="2012" name="Proteomics">
        <title>Sites of ubiquitin attachment in Saccharomyces cerevisiae.</title>
        <authorList>
            <person name="Starita L.M."/>
            <person name="Lo R.S."/>
            <person name="Eng J.K."/>
            <person name="von Haller P.D."/>
            <person name="Fields S."/>
        </authorList>
    </citation>
    <scope>UBIQUITINATION [LARGE SCALE ANALYSIS] AT LYS-133</scope>
    <scope>IDENTIFICATION BY MASS SPECTROMETRY [LARGE SCALE ANALYSIS]</scope>
</reference>
<comment type="function">
    <text evidence="3 4">Commits homoserine to the threonine biosynthesis pathway by catalyzing its O-phosphorylation.</text>
</comment>
<comment type="catalytic activity">
    <reaction evidence="4">
        <text>L-homoserine + ATP = O-phospho-L-homoserine + ADP + H(+)</text>
        <dbReference type="Rhea" id="RHEA:13985"/>
        <dbReference type="ChEBI" id="CHEBI:15378"/>
        <dbReference type="ChEBI" id="CHEBI:30616"/>
        <dbReference type="ChEBI" id="CHEBI:57476"/>
        <dbReference type="ChEBI" id="CHEBI:57590"/>
        <dbReference type="ChEBI" id="CHEBI:456216"/>
        <dbReference type="EC" id="2.7.1.39"/>
    </reaction>
    <physiologicalReaction direction="left-to-right" evidence="8">
        <dbReference type="Rhea" id="RHEA:13986"/>
    </physiologicalReaction>
</comment>
<comment type="pathway">
    <text evidence="3 8">Amino-acid biosynthesis; L-threonine biosynthesis; L-threonine from L-aspartate: step 4/5.</text>
</comment>
<comment type="subunit">
    <text evidence="4">Homodimer.</text>
</comment>
<comment type="disruption phenotype">
    <text evidence="2 3">Threonine auxotrophy (PubMed:20305002, PubMed:20305003). Leads to accumulation of toxic levels of homoserine (PubMed:20305002). Sensitive to thermal stress, cold stress, high pH, sodium chloride, lithium chloride, UV, caffeine, 5-fluorocytosine, and compounds that increase flux through the threonine biosynthetic pathway (including tacrolimus, amitrole and sulfometuron methyl) (PubMed:20305002, PubMed:20305003). Decreases survival time in an in vivo model of infection (PubMed:20305003). Double knockout with FPR1 is lethal (PubMed:20305002).</text>
</comment>
<comment type="miscellaneous">
    <text evidence="1">Present with 92600 molecules/cell in log phase SD medium.</text>
</comment>
<comment type="similarity">
    <text evidence="7">Belongs to the GHMP kinase family. Homoserine kinase subfamily.</text>
</comment>
<gene>
    <name type="primary">THR1</name>
    <name type="ordered locus">YHR025W</name>
</gene>
<keyword id="KW-0028">Amino-acid biosynthesis</keyword>
<keyword id="KW-0067">ATP-binding</keyword>
<keyword id="KW-0903">Direct protein sequencing</keyword>
<keyword id="KW-1017">Isopeptide bond</keyword>
<keyword id="KW-0418">Kinase</keyword>
<keyword id="KW-0547">Nucleotide-binding</keyword>
<keyword id="KW-1185">Reference proteome</keyword>
<keyword id="KW-0791">Threonine biosynthesis</keyword>
<keyword id="KW-0808">Transferase</keyword>
<keyword id="KW-0832">Ubl conjugation</keyword>
<accession>P17423</accession>
<accession>D3DKX2</accession>
<sequence length="357" mass="38712">MVRAFKIKVPASSANIGPGYDVLGVGLSLFLELDVTIDSSQAQETNDDPNNCKLSYTKESEGYSTVPLRSDANLITRTALYVLRCNNIRNFPSGTKVHVSNPIPLGRGLGSSGAAVVAGVILGNEVAQLGFSKQRMLDYCLMIERHPDNITAAMMGGFCGSFLRDLTPQEVERREIPLAEVLPEPSGGEDTGLVPPLPPTDIGRHVKYQWNPAIKCIAIIPQFELSTADSRGVLPKAYPTQDLVFNLQRLAVLTTALTMDPPNADLIYPAMQDRVHQPYRKTLIPGLTEILSCVTPSTYPGLLGICLSGAGPTILALATENFEEISQEIINRFAKNGIKCSWKLLEPAYDGASVEQQ</sequence>
<dbReference type="EC" id="2.7.1.39" evidence="4"/>
<dbReference type="EMBL" id="X52901">
    <property type="protein sequence ID" value="CAA37083.1"/>
    <property type="molecule type" value="Genomic_DNA"/>
</dbReference>
<dbReference type="EMBL" id="M37692">
    <property type="protein sequence ID" value="AAA35154.1"/>
    <property type="molecule type" value="Genomic_DNA"/>
</dbReference>
<dbReference type="EMBL" id="U10399">
    <property type="protein sequence ID" value="AAB68871.1"/>
    <property type="molecule type" value="Genomic_DNA"/>
</dbReference>
<dbReference type="EMBL" id="BK006934">
    <property type="protein sequence ID" value="DAA06716.1"/>
    <property type="molecule type" value="Genomic_DNA"/>
</dbReference>
<dbReference type="PIR" id="S46772">
    <property type="entry name" value="S46772"/>
</dbReference>
<dbReference type="RefSeq" id="NP_011890.1">
    <property type="nucleotide sequence ID" value="NM_001179155.1"/>
</dbReference>
<dbReference type="SMR" id="P17423"/>
<dbReference type="BioGRID" id="36456">
    <property type="interactions" value="132"/>
</dbReference>
<dbReference type="DIP" id="DIP-4305N"/>
<dbReference type="FunCoup" id="P17423">
    <property type="interactions" value="261"/>
</dbReference>
<dbReference type="IntAct" id="P17423">
    <property type="interactions" value="8"/>
</dbReference>
<dbReference type="MINT" id="P17423"/>
<dbReference type="STRING" id="4932.YHR025W"/>
<dbReference type="iPTMnet" id="P17423"/>
<dbReference type="PaxDb" id="4932-YHR025W"/>
<dbReference type="PeptideAtlas" id="P17423"/>
<dbReference type="EnsemblFungi" id="YHR025W_mRNA">
    <property type="protein sequence ID" value="YHR025W"/>
    <property type="gene ID" value="YHR025W"/>
</dbReference>
<dbReference type="GeneID" id="856420"/>
<dbReference type="KEGG" id="sce:YHR025W"/>
<dbReference type="AGR" id="SGD:S000001067"/>
<dbReference type="SGD" id="S000001067">
    <property type="gene designation" value="THR1"/>
</dbReference>
<dbReference type="VEuPathDB" id="FungiDB:YHR025W"/>
<dbReference type="eggNOG" id="KOG1537">
    <property type="taxonomic scope" value="Eukaryota"/>
</dbReference>
<dbReference type="HOGENOM" id="CLU_041243_2_1_1"/>
<dbReference type="InParanoid" id="P17423"/>
<dbReference type="OMA" id="CANRIPH"/>
<dbReference type="OrthoDB" id="195231at2759"/>
<dbReference type="BioCyc" id="YEAST:YHR025W-MONOMER"/>
<dbReference type="UniPathway" id="UPA00050">
    <property type="reaction ID" value="UER00064"/>
</dbReference>
<dbReference type="BioGRID-ORCS" id="856420">
    <property type="hits" value="4 hits in 10 CRISPR screens"/>
</dbReference>
<dbReference type="PRO" id="PR:P17423"/>
<dbReference type="Proteomes" id="UP000002311">
    <property type="component" value="Chromosome VIII"/>
</dbReference>
<dbReference type="RNAct" id="P17423">
    <property type="molecule type" value="protein"/>
</dbReference>
<dbReference type="GO" id="GO:0005524">
    <property type="term" value="F:ATP binding"/>
    <property type="evidence" value="ECO:0007669"/>
    <property type="project" value="UniProtKB-KW"/>
</dbReference>
<dbReference type="GO" id="GO:0004413">
    <property type="term" value="F:homoserine kinase activity"/>
    <property type="evidence" value="ECO:0000314"/>
    <property type="project" value="SGD"/>
</dbReference>
<dbReference type="GO" id="GO:0009092">
    <property type="term" value="P:homoserine metabolic process"/>
    <property type="evidence" value="ECO:0000314"/>
    <property type="project" value="SGD"/>
</dbReference>
<dbReference type="GO" id="GO:0009088">
    <property type="term" value="P:threonine biosynthetic process"/>
    <property type="evidence" value="ECO:0000315"/>
    <property type="project" value="UniProtKB"/>
</dbReference>
<dbReference type="FunFam" id="3.30.230.10:FF:000068">
    <property type="entry name" value="Homoserine kinase"/>
    <property type="match status" value="1"/>
</dbReference>
<dbReference type="FunFam" id="3.30.70.890:FF:000016">
    <property type="entry name" value="Homoserine kinase"/>
    <property type="match status" value="1"/>
</dbReference>
<dbReference type="Gene3D" id="3.30.230.10">
    <property type="match status" value="1"/>
</dbReference>
<dbReference type="Gene3D" id="3.30.70.890">
    <property type="entry name" value="GHMP kinase, C-terminal domain"/>
    <property type="match status" value="1"/>
</dbReference>
<dbReference type="HAMAP" id="MF_00384">
    <property type="entry name" value="Homoser_kinase"/>
    <property type="match status" value="1"/>
</dbReference>
<dbReference type="InterPro" id="IPR013750">
    <property type="entry name" value="GHMP_kinase_C_dom"/>
</dbReference>
<dbReference type="InterPro" id="IPR036554">
    <property type="entry name" value="GHMP_kinase_C_sf"/>
</dbReference>
<dbReference type="InterPro" id="IPR006204">
    <property type="entry name" value="GHMP_kinase_N_dom"/>
</dbReference>
<dbReference type="InterPro" id="IPR006203">
    <property type="entry name" value="GHMP_knse_ATP-bd_CS"/>
</dbReference>
<dbReference type="InterPro" id="IPR000870">
    <property type="entry name" value="Homoserine_kinase"/>
</dbReference>
<dbReference type="InterPro" id="IPR020568">
    <property type="entry name" value="Ribosomal_Su5_D2-typ_SF"/>
</dbReference>
<dbReference type="InterPro" id="IPR014721">
    <property type="entry name" value="Ribsml_uS5_D2-typ_fold_subgr"/>
</dbReference>
<dbReference type="NCBIfam" id="TIGR00191">
    <property type="entry name" value="thrB"/>
    <property type="match status" value="1"/>
</dbReference>
<dbReference type="PANTHER" id="PTHR20861:SF1">
    <property type="entry name" value="HOMOSERINE KINASE"/>
    <property type="match status" value="1"/>
</dbReference>
<dbReference type="PANTHER" id="PTHR20861">
    <property type="entry name" value="HOMOSERINE/4-DIPHOSPHOCYTIDYL-2-C-METHYL-D-ERYTHRITOL KINASE"/>
    <property type="match status" value="1"/>
</dbReference>
<dbReference type="Pfam" id="PF08544">
    <property type="entry name" value="GHMP_kinases_C"/>
    <property type="match status" value="1"/>
</dbReference>
<dbReference type="Pfam" id="PF00288">
    <property type="entry name" value="GHMP_kinases_N"/>
    <property type="match status" value="1"/>
</dbReference>
<dbReference type="PIRSF" id="PIRSF000676">
    <property type="entry name" value="Homoser_kin"/>
    <property type="match status" value="1"/>
</dbReference>
<dbReference type="PRINTS" id="PR00958">
    <property type="entry name" value="HOMSERKINASE"/>
</dbReference>
<dbReference type="SUPFAM" id="SSF55060">
    <property type="entry name" value="GHMP Kinase, C-terminal domain"/>
    <property type="match status" value="1"/>
</dbReference>
<dbReference type="SUPFAM" id="SSF54211">
    <property type="entry name" value="Ribosomal protein S5 domain 2-like"/>
    <property type="match status" value="1"/>
</dbReference>
<dbReference type="PROSITE" id="PS00627">
    <property type="entry name" value="GHMP_KINASES_ATP"/>
    <property type="match status" value="1"/>
</dbReference>
<proteinExistence type="evidence at protein level"/>
<feature type="initiator methionine" description="Removed" evidence="4">
    <location>
        <position position="1"/>
    </location>
</feature>
<feature type="chain" id="PRO_0000156656" description="Homoserine kinase">
    <location>
        <begin position="2"/>
        <end position="357"/>
    </location>
</feature>
<feature type="cross-link" description="Glycyl lysine isopeptide (Lys-Gly) (interchain with G-Cter in ubiquitin)" evidence="9">
    <location>
        <position position="133"/>
    </location>
</feature>
<feature type="sequence conflict" description="In Ref. 1; CAA37083." evidence="7" ref="1">
    <location>
        <position position="87"/>
    </location>
</feature>
<evidence type="ECO:0000269" key="1">
    <source>
    </source>
</evidence>
<evidence type="ECO:0000269" key="2">
    <source>
    </source>
</evidence>
<evidence type="ECO:0000269" key="3">
    <source>
    </source>
</evidence>
<evidence type="ECO:0000269" key="4">
    <source>
    </source>
</evidence>
<evidence type="ECO:0000303" key="5">
    <source>
    </source>
</evidence>
<evidence type="ECO:0000303" key="6">
    <source>
    </source>
</evidence>
<evidence type="ECO:0000305" key="7"/>
<evidence type="ECO:0000305" key="8">
    <source>
    </source>
</evidence>
<evidence type="ECO:0007744" key="9">
    <source>
    </source>
</evidence>
<protein>
    <recommendedName>
        <fullName>Homoserine kinase</fullName>
        <shortName>HK</shortName>
        <shortName>HSK</shortName>
        <ecNumber evidence="4">2.7.1.39</ecNumber>
    </recommendedName>
</protein>
<organism>
    <name type="scientific">Saccharomyces cerevisiae (strain ATCC 204508 / S288c)</name>
    <name type="common">Baker's yeast</name>
    <dbReference type="NCBI Taxonomy" id="559292"/>
    <lineage>
        <taxon>Eukaryota</taxon>
        <taxon>Fungi</taxon>
        <taxon>Dikarya</taxon>
        <taxon>Ascomycota</taxon>
        <taxon>Saccharomycotina</taxon>
        <taxon>Saccharomycetes</taxon>
        <taxon>Saccharomycetales</taxon>
        <taxon>Saccharomycetaceae</taxon>
        <taxon>Saccharomyces</taxon>
    </lineage>
</organism>
<name>KHSE_YEAST</name>